<evidence type="ECO:0000255" key="1">
    <source>
        <dbReference type="HAMAP-Rule" id="MF_01350"/>
    </source>
</evidence>
<reference key="1">
    <citation type="submission" date="2007-02" db="EMBL/GenBank/DDBJ databases">
        <title>Complete sequence of chromosome 1 of Rhodobacter sphaeroides ATCC 17029.</title>
        <authorList>
            <person name="Copeland A."/>
            <person name="Lucas S."/>
            <person name="Lapidus A."/>
            <person name="Barry K."/>
            <person name="Detter J.C."/>
            <person name="Glavina del Rio T."/>
            <person name="Hammon N."/>
            <person name="Israni S."/>
            <person name="Dalin E."/>
            <person name="Tice H."/>
            <person name="Pitluck S."/>
            <person name="Kiss H."/>
            <person name="Brettin T."/>
            <person name="Bruce D."/>
            <person name="Han C."/>
            <person name="Tapia R."/>
            <person name="Gilna P."/>
            <person name="Schmutz J."/>
            <person name="Larimer F."/>
            <person name="Land M."/>
            <person name="Hauser L."/>
            <person name="Kyrpides N."/>
            <person name="Mikhailova N."/>
            <person name="Richardson P."/>
            <person name="Mackenzie C."/>
            <person name="Choudhary M."/>
            <person name="Donohue T.J."/>
            <person name="Kaplan S."/>
        </authorList>
    </citation>
    <scope>NUCLEOTIDE SEQUENCE [LARGE SCALE GENOMIC DNA]</scope>
    <source>
        <strain>ATCC 17029 / ATH 2.4.9</strain>
    </source>
</reference>
<organism>
    <name type="scientific">Cereibacter sphaeroides (strain ATCC 17029 / ATH 2.4.9)</name>
    <name type="common">Rhodobacter sphaeroides</name>
    <dbReference type="NCBI Taxonomy" id="349101"/>
    <lineage>
        <taxon>Bacteria</taxon>
        <taxon>Pseudomonadati</taxon>
        <taxon>Pseudomonadota</taxon>
        <taxon>Alphaproteobacteria</taxon>
        <taxon>Rhodobacterales</taxon>
        <taxon>Paracoccaceae</taxon>
        <taxon>Cereibacter</taxon>
    </lineage>
</organism>
<comment type="function">
    <text evidence="1">NDH-1 shuttles electrons from NADH, via FMN and iron-sulfur (Fe-S) centers, to quinones in the respiratory chain. The immediate electron acceptor for the enzyme in this species is believed to be ubiquinone. Couples the redox reaction to proton translocation (for every two electrons transferred, four hydrogen ions are translocated across the cytoplasmic membrane), and thus conserves the redox energy in a proton gradient. This subunit may bind ubiquinone.</text>
</comment>
<comment type="catalytic activity">
    <reaction evidence="1">
        <text>a quinone + NADH + 5 H(+)(in) = a quinol + NAD(+) + 4 H(+)(out)</text>
        <dbReference type="Rhea" id="RHEA:57888"/>
        <dbReference type="ChEBI" id="CHEBI:15378"/>
        <dbReference type="ChEBI" id="CHEBI:24646"/>
        <dbReference type="ChEBI" id="CHEBI:57540"/>
        <dbReference type="ChEBI" id="CHEBI:57945"/>
        <dbReference type="ChEBI" id="CHEBI:132124"/>
    </reaction>
</comment>
<comment type="subunit">
    <text evidence="1">NDH-1 is composed of 14 different subunits. Subunits NuoA, H, J, K, L, M, N constitute the membrane sector of the complex.</text>
</comment>
<comment type="subcellular location">
    <subcellularLocation>
        <location evidence="1">Cell inner membrane</location>
        <topology evidence="1">Multi-pass membrane protein</topology>
    </subcellularLocation>
</comment>
<comment type="similarity">
    <text evidence="1">Belongs to the complex I subunit 1 family.</text>
</comment>
<name>NUOH2_CERS1</name>
<protein>
    <recommendedName>
        <fullName evidence="1">NADH-quinone oxidoreductase subunit H 2</fullName>
        <ecNumber evidence="1">7.1.1.-</ecNumber>
    </recommendedName>
    <alternativeName>
        <fullName evidence="1">NADH dehydrogenase I subunit H 2</fullName>
    </alternativeName>
    <alternativeName>
        <fullName evidence="1">NDH-1 subunit H 2</fullName>
    </alternativeName>
</protein>
<accession>A3PKI6</accession>
<sequence length="318" mass="34049">MSVLLIALFSLILLLALLGAAGVFTWGERRLLGFLQERLGPNRVGPFGFLQWVADTLKLLTKEDAPPAGADLAAYRLAPALAAFPMLAGFGVVAFAPRLVISDLDVGVLFVMGMLALTVWALVLGAWGSRNRYAMLGGLRAAAQMLAYESFLGLSLMGCVLLAGSFRMGDIVAAQEGGLWFILLQPLGAALFFLAGLAAAHRLPFDLQESEQDLVAGFMTEYSGMSFALFFLGEYLAILLVAALFTTLFLGGWAGPILPGPVWFGLKVAAISVVFVWLRAALPRPRYDQLISFAWKVALPLALLNLLVTAWIAVGRAA</sequence>
<proteinExistence type="inferred from homology"/>
<dbReference type="EC" id="7.1.1.-" evidence="1"/>
<dbReference type="EMBL" id="CP000577">
    <property type="protein sequence ID" value="ABN76852.1"/>
    <property type="molecule type" value="Genomic_DNA"/>
</dbReference>
<dbReference type="RefSeq" id="WP_011841213.1">
    <property type="nucleotide sequence ID" value="NC_009049.1"/>
</dbReference>
<dbReference type="SMR" id="A3PKI6"/>
<dbReference type="GeneID" id="67446838"/>
<dbReference type="KEGG" id="rsh:Rsph17029_1742"/>
<dbReference type="HOGENOM" id="CLU_015134_0_1_5"/>
<dbReference type="GO" id="GO:0005886">
    <property type="term" value="C:plasma membrane"/>
    <property type="evidence" value="ECO:0007669"/>
    <property type="project" value="UniProtKB-SubCell"/>
</dbReference>
<dbReference type="GO" id="GO:0003954">
    <property type="term" value="F:NADH dehydrogenase activity"/>
    <property type="evidence" value="ECO:0007669"/>
    <property type="project" value="TreeGrafter"/>
</dbReference>
<dbReference type="GO" id="GO:0016655">
    <property type="term" value="F:oxidoreductase activity, acting on NAD(P)H, quinone or similar compound as acceptor"/>
    <property type="evidence" value="ECO:0007669"/>
    <property type="project" value="UniProtKB-UniRule"/>
</dbReference>
<dbReference type="GO" id="GO:0048038">
    <property type="term" value="F:quinone binding"/>
    <property type="evidence" value="ECO:0007669"/>
    <property type="project" value="UniProtKB-KW"/>
</dbReference>
<dbReference type="GO" id="GO:0009060">
    <property type="term" value="P:aerobic respiration"/>
    <property type="evidence" value="ECO:0007669"/>
    <property type="project" value="TreeGrafter"/>
</dbReference>
<dbReference type="HAMAP" id="MF_01350">
    <property type="entry name" value="NDH1_NuoH"/>
    <property type="match status" value="1"/>
</dbReference>
<dbReference type="InterPro" id="IPR001694">
    <property type="entry name" value="NADH_UbQ_OxRdtase_su1/FPO"/>
</dbReference>
<dbReference type="NCBIfam" id="NF004741">
    <property type="entry name" value="PRK06076.1-2"/>
    <property type="match status" value="1"/>
</dbReference>
<dbReference type="PANTHER" id="PTHR11432">
    <property type="entry name" value="NADH DEHYDROGENASE SUBUNIT 1"/>
    <property type="match status" value="1"/>
</dbReference>
<dbReference type="PANTHER" id="PTHR11432:SF3">
    <property type="entry name" value="NADH-UBIQUINONE OXIDOREDUCTASE CHAIN 1"/>
    <property type="match status" value="1"/>
</dbReference>
<dbReference type="Pfam" id="PF00146">
    <property type="entry name" value="NADHdh"/>
    <property type="match status" value="1"/>
</dbReference>
<keyword id="KW-0997">Cell inner membrane</keyword>
<keyword id="KW-1003">Cell membrane</keyword>
<keyword id="KW-0472">Membrane</keyword>
<keyword id="KW-0520">NAD</keyword>
<keyword id="KW-0874">Quinone</keyword>
<keyword id="KW-1278">Translocase</keyword>
<keyword id="KW-0812">Transmembrane</keyword>
<keyword id="KW-1133">Transmembrane helix</keyword>
<keyword id="KW-0830">Ubiquinone</keyword>
<feature type="chain" id="PRO_5000227562" description="NADH-quinone oxidoreductase subunit H 2">
    <location>
        <begin position="1"/>
        <end position="318"/>
    </location>
</feature>
<feature type="transmembrane region" description="Helical" evidence="1">
    <location>
        <begin position="4"/>
        <end position="24"/>
    </location>
</feature>
<feature type="transmembrane region" description="Helical" evidence="1">
    <location>
        <begin position="77"/>
        <end position="97"/>
    </location>
</feature>
<feature type="transmembrane region" description="Helical" evidence="1">
    <location>
        <begin position="106"/>
        <end position="126"/>
    </location>
</feature>
<feature type="transmembrane region" description="Helical" evidence="1">
    <location>
        <begin position="146"/>
        <end position="166"/>
    </location>
</feature>
<feature type="transmembrane region" description="Helical" evidence="1">
    <location>
        <begin position="179"/>
        <end position="199"/>
    </location>
</feature>
<feature type="transmembrane region" description="Helical" evidence="1">
    <location>
        <begin position="214"/>
        <end position="234"/>
    </location>
</feature>
<feature type="transmembrane region" description="Helical" evidence="1">
    <location>
        <begin position="238"/>
        <end position="258"/>
    </location>
</feature>
<feature type="transmembrane region" description="Helical" evidence="1">
    <location>
        <begin position="262"/>
        <end position="282"/>
    </location>
</feature>
<feature type="transmembrane region" description="Helical" evidence="1">
    <location>
        <begin position="293"/>
        <end position="313"/>
    </location>
</feature>
<gene>
    <name evidence="1" type="primary">nuoH2</name>
    <name type="ordered locus">Rsph17029_1742</name>
</gene>